<feature type="chain" id="PRO_0000312003" description="Uncharacterized protein At5g41620">
    <location>
        <begin position="1"/>
        <end position="623"/>
    </location>
</feature>
<feature type="region of interest" description="Disordered" evidence="2">
    <location>
        <begin position="417"/>
        <end position="485"/>
    </location>
</feature>
<feature type="region of interest" description="Disordered" evidence="2">
    <location>
        <begin position="497"/>
        <end position="536"/>
    </location>
</feature>
<feature type="coiled-coil region" evidence="1">
    <location>
        <begin position="256"/>
        <end position="351"/>
    </location>
</feature>
<feature type="compositionally biased region" description="Polar residues" evidence="2">
    <location>
        <begin position="422"/>
        <end position="431"/>
    </location>
</feature>
<feature type="compositionally biased region" description="Basic and acidic residues" evidence="2">
    <location>
        <begin position="452"/>
        <end position="481"/>
    </location>
</feature>
<feature type="sequence conflict" description="In Ref. 3; BAF01422." evidence="3" ref="3">
    <original>I</original>
    <variation>F</variation>
    <location>
        <position position="217"/>
    </location>
</feature>
<reference key="1">
    <citation type="journal article" date="1997" name="DNA Res.">
        <title>Structural analysis of Arabidopsis thaliana chromosome 5. I. Sequence features of the 1.6 Mb regions covered by twenty physically assigned P1 clones.</title>
        <authorList>
            <person name="Sato S."/>
            <person name="Kotani H."/>
            <person name="Nakamura Y."/>
            <person name="Kaneko T."/>
            <person name="Asamizu E."/>
            <person name="Fukami M."/>
            <person name="Miyajima N."/>
            <person name="Tabata S."/>
        </authorList>
    </citation>
    <scope>NUCLEOTIDE SEQUENCE [LARGE SCALE GENOMIC DNA]</scope>
    <source>
        <strain>cv. Columbia</strain>
    </source>
</reference>
<reference key="2">
    <citation type="journal article" date="2017" name="Plant J.">
        <title>Araport11: a complete reannotation of the Arabidopsis thaliana reference genome.</title>
        <authorList>
            <person name="Cheng C.Y."/>
            <person name="Krishnakumar V."/>
            <person name="Chan A.P."/>
            <person name="Thibaud-Nissen F."/>
            <person name="Schobel S."/>
            <person name="Town C.D."/>
        </authorList>
    </citation>
    <scope>GENOME REANNOTATION</scope>
    <source>
        <strain>cv. Columbia</strain>
    </source>
</reference>
<reference key="3">
    <citation type="submission" date="2006-07" db="EMBL/GenBank/DDBJ databases">
        <title>Large-scale analysis of RIKEN Arabidopsis full-length (RAFL) cDNAs.</title>
        <authorList>
            <person name="Totoki Y."/>
            <person name="Seki M."/>
            <person name="Ishida J."/>
            <person name="Nakajima M."/>
            <person name="Enju A."/>
            <person name="Kamiya A."/>
            <person name="Narusaka M."/>
            <person name="Shin-i T."/>
            <person name="Nakagawa M."/>
            <person name="Sakamoto N."/>
            <person name="Oishi K."/>
            <person name="Kohara Y."/>
            <person name="Kobayashi M."/>
            <person name="Toyoda A."/>
            <person name="Sakaki Y."/>
            <person name="Sakurai T."/>
            <person name="Iida K."/>
            <person name="Akiyama K."/>
            <person name="Satou M."/>
            <person name="Toyoda T."/>
            <person name="Konagaya A."/>
            <person name="Carninci P."/>
            <person name="Kawai J."/>
            <person name="Hayashizaki Y."/>
            <person name="Shinozaki K."/>
        </authorList>
    </citation>
    <scope>NUCLEOTIDE SEQUENCE [LARGE SCALE MRNA] OF 37-623</scope>
    <source>
        <strain>cv. Columbia</strain>
    </source>
</reference>
<reference key="4">
    <citation type="submission" date="2004-08" db="EMBL/GenBank/DDBJ databases">
        <title>Arabidopsis ORF clones.</title>
        <authorList>
            <person name="Cheuk R.F."/>
            <person name="Chen H."/>
            <person name="Kim C.J."/>
            <person name="Shinn P."/>
            <person name="Ecker J.R."/>
        </authorList>
    </citation>
    <scope>NUCLEOTIDE SEQUENCE [LARGE SCALE MRNA] OF 70-623</scope>
    <source>
        <strain>cv. Columbia</strain>
    </source>
</reference>
<reference key="5">
    <citation type="submission" date="2004-10" db="EMBL/GenBank/DDBJ databases">
        <title>Arabidopsis ORF clones.</title>
        <authorList>
            <person name="Cheuk R.F."/>
            <person name="Chen H."/>
            <person name="Kim C.J."/>
            <person name="Shinn P."/>
            <person name="Ecker J.R."/>
        </authorList>
    </citation>
    <scope>NUCLEOTIDE SEQUENCE [LARGE SCALE MRNA] OF 81-623</scope>
    <source>
        <strain>cv. Columbia</strain>
    </source>
</reference>
<organism>
    <name type="scientific">Arabidopsis thaliana</name>
    <name type="common">Mouse-ear cress</name>
    <dbReference type="NCBI Taxonomy" id="3702"/>
    <lineage>
        <taxon>Eukaryota</taxon>
        <taxon>Viridiplantae</taxon>
        <taxon>Streptophyta</taxon>
        <taxon>Embryophyta</taxon>
        <taxon>Tracheophyta</taxon>
        <taxon>Spermatophyta</taxon>
        <taxon>Magnoliopsida</taxon>
        <taxon>eudicotyledons</taxon>
        <taxon>Gunneridae</taxon>
        <taxon>Pentapetalae</taxon>
        <taxon>rosids</taxon>
        <taxon>malvids</taxon>
        <taxon>Brassicales</taxon>
        <taxon>Brassicaceae</taxon>
        <taxon>Camelineae</taxon>
        <taxon>Arabidopsis</taxon>
    </lineage>
</organism>
<dbReference type="EMBL" id="AB005233">
    <property type="protein sequence ID" value="BAB11468.1"/>
    <property type="molecule type" value="Genomic_DNA"/>
</dbReference>
<dbReference type="EMBL" id="CP002688">
    <property type="protein sequence ID" value="AED94700.1"/>
    <property type="molecule type" value="Genomic_DNA"/>
</dbReference>
<dbReference type="EMBL" id="AK229571">
    <property type="protein sequence ID" value="BAF01422.1"/>
    <property type="status" value="ALT_SEQ"/>
    <property type="molecule type" value="mRNA"/>
</dbReference>
<dbReference type="EMBL" id="BT015350">
    <property type="protein sequence ID" value="AAU05473.1"/>
    <property type="status" value="ALT_INIT"/>
    <property type="molecule type" value="mRNA"/>
</dbReference>
<dbReference type="EMBL" id="BT015892">
    <property type="protein sequence ID" value="AAU95428.1"/>
    <property type="molecule type" value="mRNA"/>
</dbReference>
<dbReference type="RefSeq" id="NP_198977.3">
    <property type="nucleotide sequence ID" value="NM_123526.5"/>
</dbReference>
<dbReference type="SMR" id="Q66GQ2"/>
<dbReference type="BioGRID" id="19415">
    <property type="interactions" value="1"/>
</dbReference>
<dbReference type="FunCoup" id="Q66GQ2">
    <property type="interactions" value="390"/>
</dbReference>
<dbReference type="STRING" id="3702.Q66GQ2"/>
<dbReference type="GlyGen" id="Q66GQ2">
    <property type="glycosylation" value="1 site"/>
</dbReference>
<dbReference type="iPTMnet" id="Q66GQ2"/>
<dbReference type="PaxDb" id="3702-AT5G41620.1"/>
<dbReference type="ProteomicsDB" id="243155"/>
<dbReference type="EnsemblPlants" id="AT5G41620.1">
    <property type="protein sequence ID" value="AT5G41620.1"/>
    <property type="gene ID" value="AT5G41620"/>
</dbReference>
<dbReference type="GeneID" id="834164"/>
<dbReference type="Gramene" id="AT5G41620.1">
    <property type="protein sequence ID" value="AT5G41620.1"/>
    <property type="gene ID" value="AT5G41620"/>
</dbReference>
<dbReference type="KEGG" id="ath:AT5G41620"/>
<dbReference type="Araport" id="AT5G41620"/>
<dbReference type="TAIR" id="AT5G41620"/>
<dbReference type="eggNOG" id="ENOG502QSIG">
    <property type="taxonomic scope" value="Eukaryota"/>
</dbReference>
<dbReference type="HOGENOM" id="CLU_029750_0_0_1"/>
<dbReference type="InParanoid" id="Q66GQ2"/>
<dbReference type="OMA" id="EYQFDKS"/>
<dbReference type="PRO" id="PR:Q66GQ2"/>
<dbReference type="Proteomes" id="UP000006548">
    <property type="component" value="Chromosome 5"/>
</dbReference>
<dbReference type="ExpressionAtlas" id="Q66GQ2">
    <property type="expression patterns" value="baseline and differential"/>
</dbReference>
<dbReference type="GO" id="GO:0009507">
    <property type="term" value="C:chloroplast"/>
    <property type="evidence" value="ECO:0007005"/>
    <property type="project" value="TAIR"/>
</dbReference>
<dbReference type="InterPro" id="IPR043424">
    <property type="entry name" value="BLT-like"/>
</dbReference>
<dbReference type="PANTHER" id="PTHR31071">
    <property type="entry name" value="GB|AAF24581.1"/>
    <property type="match status" value="1"/>
</dbReference>
<dbReference type="PANTHER" id="PTHR31071:SF59">
    <property type="entry name" value="INTRACELLULAR PROTEIN TRANSPORTER USO1-LIKE PROTEIN"/>
    <property type="match status" value="1"/>
</dbReference>
<evidence type="ECO:0000255" key="1"/>
<evidence type="ECO:0000256" key="2">
    <source>
        <dbReference type="SAM" id="MobiDB-lite"/>
    </source>
</evidence>
<evidence type="ECO:0000305" key="3"/>
<comment type="sequence caution" evidence="3">
    <conflict type="erroneous initiation">
        <sequence resource="EMBL-CDS" id="AAU05473"/>
    </conflict>
    <text>Truncated N-terminus.</text>
</comment>
<comment type="sequence caution" evidence="3">
    <conflict type="erroneous initiation">
        <sequence resource="EMBL-CDS" id="BAF01422"/>
    </conflict>
    <text>Truncated N-terminus.</text>
</comment>
<comment type="sequence caution" evidence="3">
    <conflict type="miscellaneous discrepancy">
        <sequence resource="EMBL-CDS" id="BAF01422"/>
    </conflict>
    <text>Contaminating sequence.</text>
</comment>
<protein>
    <recommendedName>
        <fullName>Uncharacterized protein At5g41620</fullName>
    </recommendedName>
</protein>
<sequence length="623" mass="70830">MESKVRGEEERQKVERLVEKLKVHNNNNNRSSTPAHISFVPNSIVVSSRKLAAAFWEFHQYHYKDEEDCSYSYLSSASAKMHRGPNGFAGASSRRQRHGKAVAVKENGLDLSQFLRDPSPDHQPDSAGSLRRQIGQMLIKHHQSIDRNNHALQPVSPASYGSSLEVTTYNKAVTPSSSLEFRGRPSREPHYNLKTSTELLKVLNRIWSLEEQHVSNISLIKALKTEVAHSRVRIKELLRYQQADRHELDSVVKQLAEEKLLSKNKEVERMSSAVQSVRKALEDERKLRKRSESLHRKMARELSEVKSSLSNCVKELERGSKSNKMMELLCDEFAKGIKSYEEEIHGLKKKNLDKDWAGRGGGDQLVLHIAESWLDERMQMRLEGGDTLNGKNRSVLDKLEVEIETFLQEKRNEIPRNRRNSLESVPFNTLSAPPRDVDCEEDSGGSDSNCFELKKPAESYGDETKKPNQHNKDGSIDEKPKSPSSFQVNFEDQMAWALSSNGKKKTTRAIEDEEEEEDVKPENSNNNKKPENECATTNKNDVMGEMIRTHRRLLSETREIDEASCNFPSSRRQASPVRQWISRTVAPDLLGPSEIAIAHGVKDNTLKTKLANSSKSRLRLFKG</sequence>
<gene>
    <name type="ordered locus">At5g41620</name>
    <name type="ORF">MBK23.17</name>
</gene>
<keyword id="KW-0175">Coiled coil</keyword>
<keyword id="KW-1185">Reference proteome</keyword>
<accession>Q66GQ2</accession>
<accession>Q0WN78</accession>
<accession>Q9FFR8</accession>
<name>Y5162_ARATH</name>
<proteinExistence type="evidence at transcript level"/>